<protein>
    <recommendedName>
        <fullName evidence="1">N-acetyl-gamma-glutamyl-phosphate reductase</fullName>
        <shortName evidence="1">AGPR</shortName>
        <ecNumber evidence="1">1.2.1.38</ecNumber>
    </recommendedName>
    <alternativeName>
        <fullName evidence="1">N-acetyl-glutamate semialdehyde dehydrogenase</fullName>
        <shortName evidence="1">NAGSA dehydrogenase</shortName>
    </alternativeName>
</protein>
<feature type="chain" id="PRO_0000112471" description="N-acetyl-gamma-glutamyl-phosphate reductase">
    <location>
        <begin position="1"/>
        <end position="334"/>
    </location>
</feature>
<feature type="active site" evidence="1">
    <location>
        <position position="154"/>
    </location>
</feature>
<proteinExistence type="inferred from homology"/>
<name>ARGC_ALIF1</name>
<sequence length="334" mass="36245">MLKTAIIGASGYTGAELALMVFKHPHLSLSGLYVSENSLDKGKAISELHGSLKGIVDEALQPLVNVNQAAKECDVILLATAHEVSHNLAATFLENGCVVFDLSGAFRVKKEGFYSEFYGFEHQYEAWLDKAVYGLAEWNAEAIAKAQLVAVPGCYPTASQLALKPLVKSELLDKNQWPVINATSGVTGAGRKASLTSSFCEVSLQPYGVFNHRHQPEIAAHLGCDVIFTPHLGNFKRGILATITTKLAKGVTEKEIQEAFETAYTQTPAVRLLENEMPKIQSVEKTPFCDIGWKVQGEHLIVVSAIDNLLKGASSQAMQCINIRFGFPVLTALI</sequence>
<gene>
    <name evidence="1" type="primary">argC</name>
    <name type="ordered locus">VF_2306</name>
</gene>
<dbReference type="EC" id="1.2.1.38" evidence="1"/>
<dbReference type="EMBL" id="CP000020">
    <property type="protein sequence ID" value="AAW86801.1"/>
    <property type="molecule type" value="Genomic_DNA"/>
</dbReference>
<dbReference type="RefSeq" id="WP_011262713.1">
    <property type="nucleotide sequence ID" value="NC_006840.2"/>
</dbReference>
<dbReference type="RefSeq" id="YP_205689.1">
    <property type="nucleotide sequence ID" value="NC_006840.2"/>
</dbReference>
<dbReference type="SMR" id="Q5E2E5"/>
<dbReference type="STRING" id="312309.VF_2306"/>
<dbReference type="EnsemblBacteria" id="AAW86801">
    <property type="protein sequence ID" value="AAW86801"/>
    <property type="gene ID" value="VF_2306"/>
</dbReference>
<dbReference type="GeneID" id="54165021"/>
<dbReference type="KEGG" id="vfi:VF_2306"/>
<dbReference type="PATRIC" id="fig|312309.11.peg.2344"/>
<dbReference type="eggNOG" id="COG0002">
    <property type="taxonomic scope" value="Bacteria"/>
</dbReference>
<dbReference type="HOGENOM" id="CLU_006384_0_1_6"/>
<dbReference type="OrthoDB" id="9801289at2"/>
<dbReference type="UniPathway" id="UPA00068">
    <property type="reaction ID" value="UER00108"/>
</dbReference>
<dbReference type="Proteomes" id="UP000000537">
    <property type="component" value="Chromosome I"/>
</dbReference>
<dbReference type="GO" id="GO:0005737">
    <property type="term" value="C:cytoplasm"/>
    <property type="evidence" value="ECO:0007669"/>
    <property type="project" value="UniProtKB-SubCell"/>
</dbReference>
<dbReference type="GO" id="GO:0003942">
    <property type="term" value="F:N-acetyl-gamma-glutamyl-phosphate reductase activity"/>
    <property type="evidence" value="ECO:0007669"/>
    <property type="project" value="UniProtKB-UniRule"/>
</dbReference>
<dbReference type="GO" id="GO:0051287">
    <property type="term" value="F:NAD binding"/>
    <property type="evidence" value="ECO:0007669"/>
    <property type="project" value="InterPro"/>
</dbReference>
<dbReference type="GO" id="GO:0070401">
    <property type="term" value="F:NADP+ binding"/>
    <property type="evidence" value="ECO:0007669"/>
    <property type="project" value="InterPro"/>
</dbReference>
<dbReference type="GO" id="GO:0006526">
    <property type="term" value="P:L-arginine biosynthetic process"/>
    <property type="evidence" value="ECO:0007669"/>
    <property type="project" value="UniProtKB-UniRule"/>
</dbReference>
<dbReference type="CDD" id="cd23934">
    <property type="entry name" value="AGPR_1_C"/>
    <property type="match status" value="1"/>
</dbReference>
<dbReference type="CDD" id="cd17895">
    <property type="entry name" value="AGPR_1_N"/>
    <property type="match status" value="1"/>
</dbReference>
<dbReference type="FunFam" id="3.30.360.10:FF:000014">
    <property type="entry name" value="N-acetyl-gamma-glutamyl-phosphate reductase"/>
    <property type="match status" value="1"/>
</dbReference>
<dbReference type="Gene3D" id="3.30.360.10">
    <property type="entry name" value="Dihydrodipicolinate Reductase, domain 2"/>
    <property type="match status" value="1"/>
</dbReference>
<dbReference type="Gene3D" id="3.40.50.720">
    <property type="entry name" value="NAD(P)-binding Rossmann-like Domain"/>
    <property type="match status" value="1"/>
</dbReference>
<dbReference type="HAMAP" id="MF_00150">
    <property type="entry name" value="ArgC_type1"/>
    <property type="match status" value="1"/>
</dbReference>
<dbReference type="InterPro" id="IPR023013">
    <property type="entry name" value="AGPR_AS"/>
</dbReference>
<dbReference type="InterPro" id="IPR000706">
    <property type="entry name" value="AGPR_type-1"/>
</dbReference>
<dbReference type="InterPro" id="IPR036291">
    <property type="entry name" value="NAD(P)-bd_dom_sf"/>
</dbReference>
<dbReference type="InterPro" id="IPR050085">
    <property type="entry name" value="NAGSA_dehydrogenase"/>
</dbReference>
<dbReference type="InterPro" id="IPR000534">
    <property type="entry name" value="Semialdehyde_DH_NAD-bd"/>
</dbReference>
<dbReference type="NCBIfam" id="TIGR01850">
    <property type="entry name" value="argC"/>
    <property type="match status" value="1"/>
</dbReference>
<dbReference type="PANTHER" id="PTHR32338:SF10">
    <property type="entry name" value="N-ACETYL-GAMMA-GLUTAMYL-PHOSPHATE REDUCTASE, CHLOROPLASTIC-RELATED"/>
    <property type="match status" value="1"/>
</dbReference>
<dbReference type="PANTHER" id="PTHR32338">
    <property type="entry name" value="N-ACETYL-GAMMA-GLUTAMYL-PHOSPHATE REDUCTASE, CHLOROPLASTIC-RELATED-RELATED"/>
    <property type="match status" value="1"/>
</dbReference>
<dbReference type="Pfam" id="PF01118">
    <property type="entry name" value="Semialdhyde_dh"/>
    <property type="match status" value="1"/>
</dbReference>
<dbReference type="Pfam" id="PF22698">
    <property type="entry name" value="Semialdhyde_dhC_1"/>
    <property type="match status" value="1"/>
</dbReference>
<dbReference type="SMART" id="SM00859">
    <property type="entry name" value="Semialdhyde_dh"/>
    <property type="match status" value="1"/>
</dbReference>
<dbReference type="SUPFAM" id="SSF55347">
    <property type="entry name" value="Glyceraldehyde-3-phosphate dehydrogenase-like, C-terminal domain"/>
    <property type="match status" value="1"/>
</dbReference>
<dbReference type="SUPFAM" id="SSF51735">
    <property type="entry name" value="NAD(P)-binding Rossmann-fold domains"/>
    <property type="match status" value="1"/>
</dbReference>
<dbReference type="PROSITE" id="PS01224">
    <property type="entry name" value="ARGC"/>
    <property type="match status" value="1"/>
</dbReference>
<evidence type="ECO:0000255" key="1">
    <source>
        <dbReference type="HAMAP-Rule" id="MF_00150"/>
    </source>
</evidence>
<comment type="function">
    <text evidence="1">Catalyzes the NADPH-dependent reduction of N-acetyl-5-glutamyl phosphate to yield N-acetyl-L-glutamate 5-semialdehyde.</text>
</comment>
<comment type="catalytic activity">
    <reaction evidence="1">
        <text>N-acetyl-L-glutamate 5-semialdehyde + phosphate + NADP(+) = N-acetyl-L-glutamyl 5-phosphate + NADPH + H(+)</text>
        <dbReference type="Rhea" id="RHEA:21588"/>
        <dbReference type="ChEBI" id="CHEBI:15378"/>
        <dbReference type="ChEBI" id="CHEBI:29123"/>
        <dbReference type="ChEBI" id="CHEBI:43474"/>
        <dbReference type="ChEBI" id="CHEBI:57783"/>
        <dbReference type="ChEBI" id="CHEBI:57936"/>
        <dbReference type="ChEBI" id="CHEBI:58349"/>
        <dbReference type="EC" id="1.2.1.38"/>
    </reaction>
</comment>
<comment type="pathway">
    <text evidence="1">Amino-acid biosynthesis; L-arginine biosynthesis; N(2)-acetyl-L-ornithine from L-glutamate: step 3/4.</text>
</comment>
<comment type="subcellular location">
    <subcellularLocation>
        <location evidence="1">Cytoplasm</location>
    </subcellularLocation>
</comment>
<comment type="similarity">
    <text evidence="1">Belongs to the NAGSA dehydrogenase family. Type 1 subfamily.</text>
</comment>
<keyword id="KW-0028">Amino-acid biosynthesis</keyword>
<keyword id="KW-0055">Arginine biosynthesis</keyword>
<keyword id="KW-0963">Cytoplasm</keyword>
<keyword id="KW-0521">NADP</keyword>
<keyword id="KW-0560">Oxidoreductase</keyword>
<keyword id="KW-1185">Reference proteome</keyword>
<accession>Q5E2E5</accession>
<reference key="1">
    <citation type="journal article" date="2005" name="Proc. Natl. Acad. Sci. U.S.A.">
        <title>Complete genome sequence of Vibrio fischeri: a symbiotic bacterium with pathogenic congeners.</title>
        <authorList>
            <person name="Ruby E.G."/>
            <person name="Urbanowski M."/>
            <person name="Campbell J."/>
            <person name="Dunn A."/>
            <person name="Faini M."/>
            <person name="Gunsalus R."/>
            <person name="Lostroh P."/>
            <person name="Lupp C."/>
            <person name="McCann J."/>
            <person name="Millikan D."/>
            <person name="Schaefer A."/>
            <person name="Stabb E."/>
            <person name="Stevens A."/>
            <person name="Visick K."/>
            <person name="Whistler C."/>
            <person name="Greenberg E.P."/>
        </authorList>
    </citation>
    <scope>NUCLEOTIDE SEQUENCE [LARGE SCALE GENOMIC DNA]</scope>
    <source>
        <strain>ATCC 700601 / ES114</strain>
    </source>
</reference>
<organism>
    <name type="scientific">Aliivibrio fischeri (strain ATCC 700601 / ES114)</name>
    <name type="common">Vibrio fischeri</name>
    <dbReference type="NCBI Taxonomy" id="312309"/>
    <lineage>
        <taxon>Bacteria</taxon>
        <taxon>Pseudomonadati</taxon>
        <taxon>Pseudomonadota</taxon>
        <taxon>Gammaproteobacteria</taxon>
        <taxon>Vibrionales</taxon>
        <taxon>Vibrionaceae</taxon>
        <taxon>Aliivibrio</taxon>
    </lineage>
</organism>